<proteinExistence type="inferred from homology"/>
<comment type="catalytic activity">
    <reaction evidence="1">
        <text>1-(5-phospho-beta-D-ribosyl)-ATP + H2O = 1-(5-phospho-beta-D-ribosyl)-5'-AMP + diphosphate + H(+)</text>
        <dbReference type="Rhea" id="RHEA:22828"/>
        <dbReference type="ChEBI" id="CHEBI:15377"/>
        <dbReference type="ChEBI" id="CHEBI:15378"/>
        <dbReference type="ChEBI" id="CHEBI:33019"/>
        <dbReference type="ChEBI" id="CHEBI:59457"/>
        <dbReference type="ChEBI" id="CHEBI:73183"/>
        <dbReference type="EC" id="3.6.1.31"/>
    </reaction>
</comment>
<comment type="pathway">
    <text evidence="1">Amino-acid biosynthesis; L-histidine biosynthesis; L-histidine from 5-phospho-alpha-D-ribose 1-diphosphate: step 2/9.</text>
</comment>
<comment type="subcellular location">
    <subcellularLocation>
        <location evidence="1">Cytoplasm</location>
    </subcellularLocation>
</comment>
<comment type="similarity">
    <text evidence="1">Belongs to the PRA-PH family.</text>
</comment>
<reference key="1">
    <citation type="journal article" date="2007" name="PLoS ONE">
        <title>Analysis of the neurotoxin complex genes in Clostridium botulinum A1-A4 and B1 strains: BoNT/A3, /Ba4 and /B1 clusters are located within plasmids.</title>
        <authorList>
            <person name="Smith T.J."/>
            <person name="Hill K.K."/>
            <person name="Foley B.T."/>
            <person name="Detter J.C."/>
            <person name="Munk A.C."/>
            <person name="Bruce D.C."/>
            <person name="Doggett N.A."/>
            <person name="Smith L.A."/>
            <person name="Marks J.D."/>
            <person name="Xie G."/>
            <person name="Brettin T.S."/>
        </authorList>
    </citation>
    <scope>NUCLEOTIDE SEQUENCE [LARGE SCALE GENOMIC DNA]</scope>
    <source>
        <strain>ATCC 19397 / Type A</strain>
    </source>
</reference>
<protein>
    <recommendedName>
        <fullName evidence="1">Phosphoribosyl-ATP pyrophosphatase</fullName>
        <shortName evidence="1">PRA-PH</shortName>
        <ecNumber evidence="1">3.6.1.31</ecNumber>
    </recommendedName>
</protein>
<name>HIS2_CLOB1</name>
<organism>
    <name type="scientific">Clostridium botulinum (strain ATCC 19397 / Type A)</name>
    <dbReference type="NCBI Taxonomy" id="441770"/>
    <lineage>
        <taxon>Bacteria</taxon>
        <taxon>Bacillati</taxon>
        <taxon>Bacillota</taxon>
        <taxon>Clostridia</taxon>
        <taxon>Eubacteriales</taxon>
        <taxon>Clostridiaceae</taxon>
        <taxon>Clostridium</taxon>
    </lineage>
</organism>
<dbReference type="EC" id="3.6.1.31" evidence="1"/>
<dbReference type="EMBL" id="CP000726">
    <property type="protein sequence ID" value="ABS33502.1"/>
    <property type="molecule type" value="Genomic_DNA"/>
</dbReference>
<dbReference type="RefSeq" id="WP_011949117.1">
    <property type="nucleotide sequence ID" value="NC_009697.1"/>
</dbReference>
<dbReference type="SMR" id="A7FU84"/>
<dbReference type="GeneID" id="5185829"/>
<dbReference type="KEGG" id="cba:CLB_1594"/>
<dbReference type="HOGENOM" id="CLU_123337_0_0_9"/>
<dbReference type="UniPathway" id="UPA00031">
    <property type="reaction ID" value="UER00007"/>
</dbReference>
<dbReference type="GO" id="GO:0005737">
    <property type="term" value="C:cytoplasm"/>
    <property type="evidence" value="ECO:0007669"/>
    <property type="project" value="UniProtKB-SubCell"/>
</dbReference>
<dbReference type="GO" id="GO:0005524">
    <property type="term" value="F:ATP binding"/>
    <property type="evidence" value="ECO:0007669"/>
    <property type="project" value="UniProtKB-KW"/>
</dbReference>
<dbReference type="GO" id="GO:0004636">
    <property type="term" value="F:phosphoribosyl-ATP diphosphatase activity"/>
    <property type="evidence" value="ECO:0007669"/>
    <property type="project" value="UniProtKB-UniRule"/>
</dbReference>
<dbReference type="GO" id="GO:0000105">
    <property type="term" value="P:L-histidine biosynthetic process"/>
    <property type="evidence" value="ECO:0007669"/>
    <property type="project" value="UniProtKB-UniRule"/>
</dbReference>
<dbReference type="CDD" id="cd11534">
    <property type="entry name" value="NTP-PPase_HisIE_like"/>
    <property type="match status" value="1"/>
</dbReference>
<dbReference type="Gene3D" id="1.10.287.1080">
    <property type="entry name" value="MazG-like"/>
    <property type="match status" value="1"/>
</dbReference>
<dbReference type="HAMAP" id="MF_01020">
    <property type="entry name" value="HisE"/>
    <property type="match status" value="1"/>
</dbReference>
<dbReference type="InterPro" id="IPR008179">
    <property type="entry name" value="HisE"/>
</dbReference>
<dbReference type="InterPro" id="IPR021130">
    <property type="entry name" value="PRib-ATP_PPHydrolase-like"/>
</dbReference>
<dbReference type="NCBIfam" id="TIGR03188">
    <property type="entry name" value="histidine_hisI"/>
    <property type="match status" value="1"/>
</dbReference>
<dbReference type="PANTHER" id="PTHR42945">
    <property type="entry name" value="HISTIDINE BIOSYNTHESIS BIFUNCTIONAL PROTEIN"/>
    <property type="match status" value="1"/>
</dbReference>
<dbReference type="PANTHER" id="PTHR42945:SF9">
    <property type="entry name" value="HISTIDINE BIOSYNTHESIS BIFUNCTIONAL PROTEIN HISIE"/>
    <property type="match status" value="1"/>
</dbReference>
<dbReference type="Pfam" id="PF01503">
    <property type="entry name" value="PRA-PH"/>
    <property type="match status" value="1"/>
</dbReference>
<dbReference type="SUPFAM" id="SSF101386">
    <property type="entry name" value="all-alpha NTP pyrophosphatases"/>
    <property type="match status" value="1"/>
</dbReference>
<keyword id="KW-0028">Amino-acid biosynthesis</keyword>
<keyword id="KW-0067">ATP-binding</keyword>
<keyword id="KW-0963">Cytoplasm</keyword>
<keyword id="KW-0368">Histidine biosynthesis</keyword>
<keyword id="KW-0378">Hydrolase</keyword>
<keyword id="KW-0547">Nucleotide-binding</keyword>
<gene>
    <name evidence="1" type="primary">hisE</name>
    <name type="ordered locus">CLB_1594</name>
</gene>
<feature type="chain" id="PRO_1000063335" description="Phosphoribosyl-ATP pyrophosphatase">
    <location>
        <begin position="1"/>
        <end position="110"/>
    </location>
</feature>
<accession>A7FU84</accession>
<sequence>MNRNNVIDSLFNIIEDRKDKPIEGSYTGYLFEKGLDKILKKVGEESSEVIIAAKNEDEEELIKEICDLTYHIMVLMVEKQIKLDDIEKELEKRRERICNKKNERKTIEKL</sequence>
<evidence type="ECO:0000255" key="1">
    <source>
        <dbReference type="HAMAP-Rule" id="MF_01020"/>
    </source>
</evidence>